<sequence>MDTIVAVATPPGKGAIAILRLSGPDSWKIVQKHLRTRSEIVPRKAIHGWIHENGEDVDEVVVIFYKSPKSYTGEDMVEVMCHGGPLVVKKLLDLFLKSGARMAEPGEFTKRAFLNGKMDLTSAEAVRDLIEAKSETSLKLSLRNLKGGLKDFVESLRRELIEVLAEIRVELDYPDEIETNTGEVVTRLERIKEKLTKELKKADAGILLNRGFRMVIVGKPNVGKSTLLNRLLNEDRAIVTDIPGTTRDVISEEIVIRGILFRIVDTAGVRSETNDLVERLGIERTLQEIEKADIVLFVLDASSPLDEEDRKILERIKNKRYLVVINKVDVVEKINEEEIKNKLGTDRHMVKISALKGEGLEKLEEAIYRETQEIFERGSDSLITNLRQKQLLENVKGHLEDAIKSLKEGMPVDMASIDLERALSLLDEVTGRSFREDLLDTIFSNFCVGK</sequence>
<feature type="chain" id="PRO_0000345927" description="tRNA modification GTPase MnmE">
    <location>
        <begin position="1"/>
        <end position="450"/>
    </location>
</feature>
<feature type="domain" description="TrmE-type G">
    <location>
        <begin position="211"/>
        <end position="372"/>
    </location>
</feature>
<feature type="binding site" evidence="1">
    <location>
        <position position="20"/>
    </location>
    <ligand>
        <name>(6S)-5-formyl-5,6,7,8-tetrahydrofolate</name>
        <dbReference type="ChEBI" id="CHEBI:57457"/>
    </ligand>
</feature>
<feature type="binding site" evidence="1">
    <location>
        <position position="78"/>
    </location>
    <ligand>
        <name>(6S)-5-formyl-5,6,7,8-tetrahydrofolate</name>
        <dbReference type="ChEBI" id="CHEBI:57457"/>
    </ligand>
</feature>
<feature type="binding site" evidence="1">
    <location>
        <position position="117"/>
    </location>
    <ligand>
        <name>(6S)-5-formyl-5,6,7,8-tetrahydrofolate</name>
        <dbReference type="ChEBI" id="CHEBI:57457"/>
    </ligand>
</feature>
<feature type="binding site" evidence="1">
    <location>
        <begin position="221"/>
        <end position="226"/>
    </location>
    <ligand>
        <name>GTP</name>
        <dbReference type="ChEBI" id="CHEBI:37565"/>
    </ligand>
</feature>
<feature type="binding site" evidence="1">
    <location>
        <position position="221"/>
    </location>
    <ligand>
        <name>K(+)</name>
        <dbReference type="ChEBI" id="CHEBI:29103"/>
    </ligand>
</feature>
<feature type="binding site" evidence="1">
    <location>
        <position position="225"/>
    </location>
    <ligand>
        <name>Mg(2+)</name>
        <dbReference type="ChEBI" id="CHEBI:18420"/>
    </ligand>
</feature>
<feature type="binding site" evidence="1">
    <location>
        <begin position="240"/>
        <end position="246"/>
    </location>
    <ligand>
        <name>GTP</name>
        <dbReference type="ChEBI" id="CHEBI:37565"/>
    </ligand>
</feature>
<feature type="binding site" evidence="1">
    <location>
        <position position="240"/>
    </location>
    <ligand>
        <name>K(+)</name>
        <dbReference type="ChEBI" id="CHEBI:29103"/>
    </ligand>
</feature>
<feature type="binding site" evidence="1">
    <location>
        <position position="242"/>
    </location>
    <ligand>
        <name>K(+)</name>
        <dbReference type="ChEBI" id="CHEBI:29103"/>
    </ligand>
</feature>
<feature type="binding site" evidence="1">
    <location>
        <position position="245"/>
    </location>
    <ligand>
        <name>K(+)</name>
        <dbReference type="ChEBI" id="CHEBI:29103"/>
    </ligand>
</feature>
<feature type="binding site" evidence="1">
    <location>
        <position position="246"/>
    </location>
    <ligand>
        <name>Mg(2+)</name>
        <dbReference type="ChEBI" id="CHEBI:18420"/>
    </ligand>
</feature>
<feature type="binding site" evidence="1">
    <location>
        <begin position="265"/>
        <end position="268"/>
    </location>
    <ligand>
        <name>GTP</name>
        <dbReference type="ChEBI" id="CHEBI:37565"/>
    </ligand>
</feature>
<feature type="binding site" evidence="1">
    <location>
        <position position="450"/>
    </location>
    <ligand>
        <name>(6S)-5-formyl-5,6,7,8-tetrahydrofolate</name>
        <dbReference type="ChEBI" id="CHEBI:57457"/>
    </ligand>
</feature>
<evidence type="ECO:0000255" key="1">
    <source>
        <dbReference type="HAMAP-Rule" id="MF_00379"/>
    </source>
</evidence>
<protein>
    <recommendedName>
        <fullName evidence="1">tRNA modification GTPase MnmE</fullName>
        <ecNumber evidence="1">3.6.-.-</ecNumber>
    </recommendedName>
</protein>
<name>MNME_THEP1</name>
<dbReference type="EC" id="3.6.-.-" evidence="1"/>
<dbReference type="EMBL" id="CP000702">
    <property type="protein sequence ID" value="ABQ46677.1"/>
    <property type="molecule type" value="Genomic_DNA"/>
</dbReference>
<dbReference type="RefSeq" id="WP_011943267.1">
    <property type="nucleotide sequence ID" value="NC_009486.1"/>
</dbReference>
<dbReference type="SMR" id="A5IKF4"/>
<dbReference type="STRING" id="390874.Tpet_0657"/>
<dbReference type="KEGG" id="tpt:Tpet_0657"/>
<dbReference type="eggNOG" id="COG0486">
    <property type="taxonomic scope" value="Bacteria"/>
</dbReference>
<dbReference type="HOGENOM" id="CLU_019624_4_1_0"/>
<dbReference type="Proteomes" id="UP000006558">
    <property type="component" value="Chromosome"/>
</dbReference>
<dbReference type="GO" id="GO:0005829">
    <property type="term" value="C:cytosol"/>
    <property type="evidence" value="ECO:0007669"/>
    <property type="project" value="TreeGrafter"/>
</dbReference>
<dbReference type="GO" id="GO:0005525">
    <property type="term" value="F:GTP binding"/>
    <property type="evidence" value="ECO:0007669"/>
    <property type="project" value="UniProtKB-UniRule"/>
</dbReference>
<dbReference type="GO" id="GO:0003924">
    <property type="term" value="F:GTPase activity"/>
    <property type="evidence" value="ECO:0007669"/>
    <property type="project" value="UniProtKB-UniRule"/>
</dbReference>
<dbReference type="GO" id="GO:0046872">
    <property type="term" value="F:metal ion binding"/>
    <property type="evidence" value="ECO:0007669"/>
    <property type="project" value="UniProtKB-KW"/>
</dbReference>
<dbReference type="GO" id="GO:0030488">
    <property type="term" value="P:tRNA methylation"/>
    <property type="evidence" value="ECO:0007669"/>
    <property type="project" value="TreeGrafter"/>
</dbReference>
<dbReference type="GO" id="GO:0002098">
    <property type="term" value="P:tRNA wobble uridine modification"/>
    <property type="evidence" value="ECO:0007669"/>
    <property type="project" value="TreeGrafter"/>
</dbReference>
<dbReference type="CDD" id="cd04164">
    <property type="entry name" value="trmE"/>
    <property type="match status" value="1"/>
</dbReference>
<dbReference type="CDD" id="cd14858">
    <property type="entry name" value="TrmE_N"/>
    <property type="match status" value="1"/>
</dbReference>
<dbReference type="FunFam" id="3.30.1360.120:FF:000003">
    <property type="entry name" value="tRNA modification GTPase MnmE"/>
    <property type="match status" value="1"/>
</dbReference>
<dbReference type="FunFam" id="3.40.50.300:FF:000494">
    <property type="entry name" value="tRNA modification GTPase MnmE"/>
    <property type="match status" value="1"/>
</dbReference>
<dbReference type="Gene3D" id="3.40.50.300">
    <property type="entry name" value="P-loop containing nucleotide triphosphate hydrolases"/>
    <property type="match status" value="1"/>
</dbReference>
<dbReference type="Gene3D" id="3.30.1360.120">
    <property type="entry name" value="Probable tRNA modification gtpase trme, domain 1"/>
    <property type="match status" value="1"/>
</dbReference>
<dbReference type="Gene3D" id="1.20.120.430">
    <property type="entry name" value="tRNA modification GTPase MnmE domain 2"/>
    <property type="match status" value="1"/>
</dbReference>
<dbReference type="HAMAP" id="MF_00379">
    <property type="entry name" value="GTPase_MnmE"/>
    <property type="match status" value="1"/>
</dbReference>
<dbReference type="InterPro" id="IPR031168">
    <property type="entry name" value="G_TrmE"/>
</dbReference>
<dbReference type="InterPro" id="IPR006073">
    <property type="entry name" value="GTP-bd"/>
</dbReference>
<dbReference type="InterPro" id="IPR018948">
    <property type="entry name" value="GTP-bd_TrmE_N"/>
</dbReference>
<dbReference type="InterPro" id="IPR004520">
    <property type="entry name" value="GTPase_MnmE"/>
</dbReference>
<dbReference type="InterPro" id="IPR008144">
    <property type="entry name" value="Guanylate_kin-like_dom"/>
</dbReference>
<dbReference type="InterPro" id="IPR027368">
    <property type="entry name" value="MnmE_dom2"/>
</dbReference>
<dbReference type="InterPro" id="IPR025867">
    <property type="entry name" value="MnmE_helical"/>
</dbReference>
<dbReference type="InterPro" id="IPR027417">
    <property type="entry name" value="P-loop_NTPase"/>
</dbReference>
<dbReference type="InterPro" id="IPR005225">
    <property type="entry name" value="Small_GTP-bd"/>
</dbReference>
<dbReference type="InterPro" id="IPR027266">
    <property type="entry name" value="TrmE/GcvT_dom1"/>
</dbReference>
<dbReference type="NCBIfam" id="TIGR00450">
    <property type="entry name" value="mnmE_trmE_thdF"/>
    <property type="match status" value="1"/>
</dbReference>
<dbReference type="NCBIfam" id="NF003661">
    <property type="entry name" value="PRK05291.1-3"/>
    <property type="match status" value="1"/>
</dbReference>
<dbReference type="NCBIfam" id="TIGR00231">
    <property type="entry name" value="small_GTP"/>
    <property type="match status" value="1"/>
</dbReference>
<dbReference type="PANTHER" id="PTHR42714">
    <property type="entry name" value="TRNA MODIFICATION GTPASE GTPBP3"/>
    <property type="match status" value="1"/>
</dbReference>
<dbReference type="PANTHER" id="PTHR42714:SF2">
    <property type="entry name" value="TRNA MODIFICATION GTPASE GTPBP3, MITOCHONDRIAL"/>
    <property type="match status" value="1"/>
</dbReference>
<dbReference type="Pfam" id="PF01926">
    <property type="entry name" value="MMR_HSR1"/>
    <property type="match status" value="1"/>
</dbReference>
<dbReference type="Pfam" id="PF12631">
    <property type="entry name" value="MnmE_helical"/>
    <property type="match status" value="1"/>
</dbReference>
<dbReference type="Pfam" id="PF10396">
    <property type="entry name" value="TrmE_N"/>
    <property type="match status" value="1"/>
</dbReference>
<dbReference type="PRINTS" id="PR00326">
    <property type="entry name" value="GTP1OBG"/>
</dbReference>
<dbReference type="SUPFAM" id="SSF52540">
    <property type="entry name" value="P-loop containing nucleoside triphosphate hydrolases"/>
    <property type="match status" value="1"/>
</dbReference>
<dbReference type="PROSITE" id="PS51709">
    <property type="entry name" value="G_TRME"/>
    <property type="match status" value="1"/>
</dbReference>
<organism>
    <name type="scientific">Thermotoga petrophila (strain ATCC BAA-488 / DSM 13995 / JCM 10881 / RKU-1)</name>
    <dbReference type="NCBI Taxonomy" id="390874"/>
    <lineage>
        <taxon>Bacteria</taxon>
        <taxon>Thermotogati</taxon>
        <taxon>Thermotogota</taxon>
        <taxon>Thermotogae</taxon>
        <taxon>Thermotogales</taxon>
        <taxon>Thermotogaceae</taxon>
        <taxon>Thermotoga</taxon>
    </lineage>
</organism>
<proteinExistence type="inferred from homology"/>
<accession>A5IKF4</accession>
<comment type="function">
    <text evidence="1">Exhibits a very high intrinsic GTPase hydrolysis rate. Involved in the addition of a carboxymethylaminomethyl (cmnm) group at the wobble position (U34) of certain tRNAs, forming tRNA-cmnm(5)s(2)U34.</text>
</comment>
<comment type="cofactor">
    <cofactor evidence="1">
        <name>K(+)</name>
        <dbReference type="ChEBI" id="CHEBI:29103"/>
    </cofactor>
    <text evidence="1">Binds 1 potassium ion per subunit.</text>
</comment>
<comment type="subunit">
    <text evidence="1">Homodimer. Heterotetramer of two MnmE and two MnmG subunits.</text>
</comment>
<comment type="subcellular location">
    <subcellularLocation>
        <location evidence="1">Cytoplasm</location>
    </subcellularLocation>
</comment>
<comment type="similarity">
    <text evidence="1">Belongs to the TRAFAC class TrmE-Era-EngA-EngB-Septin-like GTPase superfamily. TrmE GTPase family.</text>
</comment>
<keyword id="KW-0963">Cytoplasm</keyword>
<keyword id="KW-0342">GTP-binding</keyword>
<keyword id="KW-0378">Hydrolase</keyword>
<keyword id="KW-0460">Magnesium</keyword>
<keyword id="KW-0479">Metal-binding</keyword>
<keyword id="KW-0547">Nucleotide-binding</keyword>
<keyword id="KW-0630">Potassium</keyword>
<keyword id="KW-0819">tRNA processing</keyword>
<reference key="1">
    <citation type="submission" date="2007-05" db="EMBL/GenBank/DDBJ databases">
        <title>Complete sequence of Thermotoga petrophila RKU-1.</title>
        <authorList>
            <consortium name="US DOE Joint Genome Institute"/>
            <person name="Copeland A."/>
            <person name="Lucas S."/>
            <person name="Lapidus A."/>
            <person name="Barry K."/>
            <person name="Glavina del Rio T."/>
            <person name="Dalin E."/>
            <person name="Tice H."/>
            <person name="Pitluck S."/>
            <person name="Sims D."/>
            <person name="Brettin T."/>
            <person name="Bruce D."/>
            <person name="Detter J.C."/>
            <person name="Han C."/>
            <person name="Tapia R."/>
            <person name="Schmutz J."/>
            <person name="Larimer F."/>
            <person name="Land M."/>
            <person name="Hauser L."/>
            <person name="Kyrpides N."/>
            <person name="Mikhailova N."/>
            <person name="Nelson K."/>
            <person name="Gogarten J.P."/>
            <person name="Noll K."/>
            <person name="Richardson P."/>
        </authorList>
    </citation>
    <scope>NUCLEOTIDE SEQUENCE [LARGE SCALE GENOMIC DNA]</scope>
    <source>
        <strain>ATCC BAA-488 / DSM 13995 / JCM 10881 / RKU-1</strain>
    </source>
</reference>
<gene>
    <name evidence="1" type="primary">mnmE</name>
    <name evidence="1" type="synonym">trmE</name>
    <name type="ordered locus">Tpet_0657</name>
</gene>